<proteinExistence type="inferred from homology"/>
<organism>
    <name type="scientific">Dichelobacter nodosus (strain VCS1703A)</name>
    <dbReference type="NCBI Taxonomy" id="246195"/>
    <lineage>
        <taxon>Bacteria</taxon>
        <taxon>Pseudomonadati</taxon>
        <taxon>Pseudomonadota</taxon>
        <taxon>Gammaproteobacteria</taxon>
        <taxon>Cardiobacteriales</taxon>
        <taxon>Cardiobacteriaceae</taxon>
        <taxon>Dichelobacter</taxon>
    </lineage>
</organism>
<feature type="chain" id="PRO_1000018700" description="Phosphoribosylaminoimidazole-succinocarboxamide synthase">
    <location>
        <begin position="1"/>
        <end position="239"/>
    </location>
</feature>
<evidence type="ECO:0000255" key="1">
    <source>
        <dbReference type="HAMAP-Rule" id="MF_00137"/>
    </source>
</evidence>
<keyword id="KW-0067">ATP-binding</keyword>
<keyword id="KW-0436">Ligase</keyword>
<keyword id="KW-0547">Nucleotide-binding</keyword>
<keyword id="KW-0658">Purine biosynthesis</keyword>
<keyword id="KW-1185">Reference proteome</keyword>
<name>PUR7_DICNV</name>
<sequence length="239" mass="26827">MQKHDLLYSGKAKSVYATDNPTQIIMHYNDDATAGNGAKHAVIADKGILNNQITTLIFKVLKAADIPTHHIETLNDREQLCQKVTIFPLEVIVRNTVAGSMAKRLGMEEGTELDNVVFEICYKNDKLNDPLINDDHAVALGAASYEDLDTIYELTDKINQSLSALFAACQINLVDFKIEFGRTAAGEIVLADEISPDTCRLWDMQTNNKLDKDRFRRDLGGLTDAYREVLRRLQQLELE</sequence>
<gene>
    <name evidence="1" type="primary">purC</name>
    <name type="ordered locus">DNO_1112</name>
</gene>
<comment type="catalytic activity">
    <reaction evidence="1">
        <text>5-amino-1-(5-phospho-D-ribosyl)imidazole-4-carboxylate + L-aspartate + ATP = (2S)-2-[5-amino-1-(5-phospho-beta-D-ribosyl)imidazole-4-carboxamido]succinate + ADP + phosphate + 2 H(+)</text>
        <dbReference type="Rhea" id="RHEA:22628"/>
        <dbReference type="ChEBI" id="CHEBI:15378"/>
        <dbReference type="ChEBI" id="CHEBI:29991"/>
        <dbReference type="ChEBI" id="CHEBI:30616"/>
        <dbReference type="ChEBI" id="CHEBI:43474"/>
        <dbReference type="ChEBI" id="CHEBI:58443"/>
        <dbReference type="ChEBI" id="CHEBI:77657"/>
        <dbReference type="ChEBI" id="CHEBI:456216"/>
        <dbReference type="EC" id="6.3.2.6"/>
    </reaction>
</comment>
<comment type="pathway">
    <text evidence="1">Purine metabolism; IMP biosynthesis via de novo pathway; 5-amino-1-(5-phospho-D-ribosyl)imidazole-4-carboxamide from 5-amino-1-(5-phospho-D-ribosyl)imidazole-4-carboxylate: step 1/2.</text>
</comment>
<comment type="similarity">
    <text evidence="1">Belongs to the SAICAR synthetase family.</text>
</comment>
<dbReference type="EC" id="6.3.2.6" evidence="1"/>
<dbReference type="EMBL" id="CP000513">
    <property type="protein sequence ID" value="ABQ13964.1"/>
    <property type="molecule type" value="Genomic_DNA"/>
</dbReference>
<dbReference type="RefSeq" id="WP_012031416.1">
    <property type="nucleotide sequence ID" value="NC_009446.1"/>
</dbReference>
<dbReference type="SMR" id="A5EXP1"/>
<dbReference type="STRING" id="246195.DNO_1112"/>
<dbReference type="KEGG" id="dno:DNO_1112"/>
<dbReference type="eggNOG" id="COG0152">
    <property type="taxonomic scope" value="Bacteria"/>
</dbReference>
<dbReference type="HOGENOM" id="CLU_061495_2_0_6"/>
<dbReference type="OrthoDB" id="9801549at2"/>
<dbReference type="UniPathway" id="UPA00074">
    <property type="reaction ID" value="UER00131"/>
</dbReference>
<dbReference type="Proteomes" id="UP000000248">
    <property type="component" value="Chromosome"/>
</dbReference>
<dbReference type="GO" id="GO:0005524">
    <property type="term" value="F:ATP binding"/>
    <property type="evidence" value="ECO:0007669"/>
    <property type="project" value="UniProtKB-KW"/>
</dbReference>
<dbReference type="GO" id="GO:0004639">
    <property type="term" value="F:phosphoribosylaminoimidazolesuccinocarboxamide synthase activity"/>
    <property type="evidence" value="ECO:0007669"/>
    <property type="project" value="UniProtKB-UniRule"/>
</dbReference>
<dbReference type="GO" id="GO:0006189">
    <property type="term" value="P:'de novo' IMP biosynthetic process"/>
    <property type="evidence" value="ECO:0007669"/>
    <property type="project" value="UniProtKB-UniRule"/>
</dbReference>
<dbReference type="GO" id="GO:0009236">
    <property type="term" value="P:cobalamin biosynthetic process"/>
    <property type="evidence" value="ECO:0007669"/>
    <property type="project" value="InterPro"/>
</dbReference>
<dbReference type="CDD" id="cd01415">
    <property type="entry name" value="SAICAR_synt_PurC"/>
    <property type="match status" value="1"/>
</dbReference>
<dbReference type="FunFam" id="3.30.470.20:FF:000006">
    <property type="entry name" value="Phosphoribosylaminoimidazole-succinocarboxamide synthase"/>
    <property type="match status" value="1"/>
</dbReference>
<dbReference type="Gene3D" id="3.30.470.20">
    <property type="entry name" value="ATP-grasp fold, B domain"/>
    <property type="match status" value="1"/>
</dbReference>
<dbReference type="Gene3D" id="3.30.200.20">
    <property type="entry name" value="Phosphorylase Kinase, domain 1"/>
    <property type="match status" value="1"/>
</dbReference>
<dbReference type="HAMAP" id="MF_00137">
    <property type="entry name" value="SAICAR_synth"/>
    <property type="match status" value="1"/>
</dbReference>
<dbReference type="InterPro" id="IPR028923">
    <property type="entry name" value="SAICAR_synt/ADE2_N"/>
</dbReference>
<dbReference type="InterPro" id="IPR033934">
    <property type="entry name" value="SAICAR_synt_PurC"/>
</dbReference>
<dbReference type="InterPro" id="IPR001636">
    <property type="entry name" value="SAICAR_synth"/>
</dbReference>
<dbReference type="InterPro" id="IPR050089">
    <property type="entry name" value="SAICAR_synthetase"/>
</dbReference>
<dbReference type="InterPro" id="IPR018236">
    <property type="entry name" value="SAICAR_synthetase_CS"/>
</dbReference>
<dbReference type="NCBIfam" id="TIGR00081">
    <property type="entry name" value="purC"/>
    <property type="match status" value="1"/>
</dbReference>
<dbReference type="PANTHER" id="PTHR43599">
    <property type="entry name" value="MULTIFUNCTIONAL PROTEIN ADE2"/>
    <property type="match status" value="1"/>
</dbReference>
<dbReference type="PANTHER" id="PTHR43599:SF3">
    <property type="entry name" value="SI:DKEY-6E2.2"/>
    <property type="match status" value="1"/>
</dbReference>
<dbReference type="Pfam" id="PF01259">
    <property type="entry name" value="SAICAR_synt"/>
    <property type="match status" value="1"/>
</dbReference>
<dbReference type="SUPFAM" id="SSF56104">
    <property type="entry name" value="SAICAR synthase-like"/>
    <property type="match status" value="1"/>
</dbReference>
<dbReference type="PROSITE" id="PS01057">
    <property type="entry name" value="SAICAR_SYNTHETASE_1"/>
    <property type="match status" value="1"/>
</dbReference>
<dbReference type="PROSITE" id="PS01058">
    <property type="entry name" value="SAICAR_SYNTHETASE_2"/>
    <property type="match status" value="1"/>
</dbReference>
<accession>A5EXP1</accession>
<protein>
    <recommendedName>
        <fullName evidence="1">Phosphoribosylaminoimidazole-succinocarboxamide synthase</fullName>
        <ecNumber evidence="1">6.3.2.6</ecNumber>
    </recommendedName>
    <alternativeName>
        <fullName evidence="1">SAICAR synthetase</fullName>
    </alternativeName>
</protein>
<reference key="1">
    <citation type="journal article" date="2007" name="Nat. Biotechnol.">
        <title>Genome sequence and identification of candidate vaccine antigens from the animal pathogen Dichelobacter nodosus.</title>
        <authorList>
            <person name="Myers G.S.A."/>
            <person name="Parker D."/>
            <person name="Al-Hasani K."/>
            <person name="Kennan R.M."/>
            <person name="Seemann T."/>
            <person name="Ren Q."/>
            <person name="Badger J.H."/>
            <person name="Selengut J.D."/>
            <person name="Deboy R.T."/>
            <person name="Tettelin H."/>
            <person name="Boyce J.D."/>
            <person name="McCarl V.P."/>
            <person name="Han X."/>
            <person name="Nelson W.C."/>
            <person name="Madupu R."/>
            <person name="Mohamoud Y."/>
            <person name="Holley T."/>
            <person name="Fedorova N."/>
            <person name="Khouri H."/>
            <person name="Bottomley S.P."/>
            <person name="Whittington R.J."/>
            <person name="Adler B."/>
            <person name="Songer J.G."/>
            <person name="Rood J.I."/>
            <person name="Paulsen I.T."/>
        </authorList>
    </citation>
    <scope>NUCLEOTIDE SEQUENCE [LARGE SCALE GENOMIC DNA]</scope>
    <source>
        <strain>VCS1703A</strain>
    </source>
</reference>